<accession>Q6MAK8</accession>
<gene>
    <name evidence="1" type="primary">atpC</name>
    <name type="ordered locus">pc1667</name>
</gene>
<dbReference type="EMBL" id="BX908798">
    <property type="protein sequence ID" value="CAF24391.1"/>
    <property type="molecule type" value="Genomic_DNA"/>
</dbReference>
<dbReference type="RefSeq" id="WP_011176213.1">
    <property type="nucleotide sequence ID" value="NC_005861.2"/>
</dbReference>
<dbReference type="SMR" id="Q6MAK8"/>
<dbReference type="STRING" id="264201.pc1667"/>
<dbReference type="KEGG" id="pcu:PC_RS07970"/>
<dbReference type="eggNOG" id="COG0355">
    <property type="taxonomic scope" value="Bacteria"/>
</dbReference>
<dbReference type="HOGENOM" id="CLU_084338_1_1_0"/>
<dbReference type="OrthoDB" id="21579at2"/>
<dbReference type="Proteomes" id="UP000000529">
    <property type="component" value="Chromosome"/>
</dbReference>
<dbReference type="GO" id="GO:0005886">
    <property type="term" value="C:plasma membrane"/>
    <property type="evidence" value="ECO:0007669"/>
    <property type="project" value="UniProtKB-SubCell"/>
</dbReference>
<dbReference type="GO" id="GO:0045259">
    <property type="term" value="C:proton-transporting ATP synthase complex"/>
    <property type="evidence" value="ECO:0007669"/>
    <property type="project" value="UniProtKB-KW"/>
</dbReference>
<dbReference type="GO" id="GO:0005524">
    <property type="term" value="F:ATP binding"/>
    <property type="evidence" value="ECO:0007669"/>
    <property type="project" value="UniProtKB-UniRule"/>
</dbReference>
<dbReference type="GO" id="GO:0046933">
    <property type="term" value="F:proton-transporting ATP synthase activity, rotational mechanism"/>
    <property type="evidence" value="ECO:0007669"/>
    <property type="project" value="UniProtKB-UniRule"/>
</dbReference>
<dbReference type="CDD" id="cd12152">
    <property type="entry name" value="F1-ATPase_delta"/>
    <property type="match status" value="1"/>
</dbReference>
<dbReference type="Gene3D" id="1.20.5.440">
    <property type="entry name" value="ATP synthase delta/epsilon subunit, C-terminal domain"/>
    <property type="match status" value="1"/>
</dbReference>
<dbReference type="Gene3D" id="2.60.15.10">
    <property type="entry name" value="F0F1 ATP synthase delta/epsilon subunit, N-terminal"/>
    <property type="match status" value="1"/>
</dbReference>
<dbReference type="HAMAP" id="MF_00530">
    <property type="entry name" value="ATP_synth_epsil_bac"/>
    <property type="match status" value="1"/>
</dbReference>
<dbReference type="InterPro" id="IPR001469">
    <property type="entry name" value="ATP_synth_F1_dsu/esu"/>
</dbReference>
<dbReference type="InterPro" id="IPR020546">
    <property type="entry name" value="ATP_synth_F1_dsu/esu_N"/>
</dbReference>
<dbReference type="InterPro" id="IPR020547">
    <property type="entry name" value="ATP_synth_F1_esu_C"/>
</dbReference>
<dbReference type="InterPro" id="IPR036771">
    <property type="entry name" value="ATPsynth_dsu/esu_N"/>
</dbReference>
<dbReference type="NCBIfam" id="TIGR01216">
    <property type="entry name" value="ATP_synt_epsi"/>
    <property type="match status" value="1"/>
</dbReference>
<dbReference type="PANTHER" id="PTHR13822">
    <property type="entry name" value="ATP SYNTHASE DELTA/EPSILON CHAIN"/>
    <property type="match status" value="1"/>
</dbReference>
<dbReference type="PANTHER" id="PTHR13822:SF10">
    <property type="entry name" value="ATP SYNTHASE EPSILON CHAIN, CHLOROPLASTIC"/>
    <property type="match status" value="1"/>
</dbReference>
<dbReference type="Pfam" id="PF00401">
    <property type="entry name" value="ATP-synt_DE"/>
    <property type="match status" value="1"/>
</dbReference>
<dbReference type="Pfam" id="PF02823">
    <property type="entry name" value="ATP-synt_DE_N"/>
    <property type="match status" value="1"/>
</dbReference>
<dbReference type="SUPFAM" id="SSF51344">
    <property type="entry name" value="Epsilon subunit of F1F0-ATP synthase N-terminal domain"/>
    <property type="match status" value="1"/>
</dbReference>
<keyword id="KW-0066">ATP synthesis</keyword>
<keyword id="KW-0997">Cell inner membrane</keyword>
<keyword id="KW-1003">Cell membrane</keyword>
<keyword id="KW-0139">CF(1)</keyword>
<keyword id="KW-0375">Hydrogen ion transport</keyword>
<keyword id="KW-0406">Ion transport</keyword>
<keyword id="KW-0472">Membrane</keyword>
<keyword id="KW-1185">Reference proteome</keyword>
<keyword id="KW-0813">Transport</keyword>
<sequence length="147" mass="16669">MLYPLSILTSEKNVFNEDVYSVNVPGADGYFEVLAHHATVIALLQPGKLTIINKDHQKLYFGITTGFIEVSHNSATIIADAIESVQEIDVERAKQSYERAKMRLESPDKHVDKERAKRSLNRAKNRIKLFLEIHPQVSFIPLKALLI</sequence>
<organism>
    <name type="scientific">Protochlamydia amoebophila (strain UWE25)</name>
    <dbReference type="NCBI Taxonomy" id="264201"/>
    <lineage>
        <taxon>Bacteria</taxon>
        <taxon>Pseudomonadati</taxon>
        <taxon>Chlamydiota</taxon>
        <taxon>Chlamydiia</taxon>
        <taxon>Parachlamydiales</taxon>
        <taxon>Parachlamydiaceae</taxon>
        <taxon>Candidatus Protochlamydia</taxon>
    </lineage>
</organism>
<reference key="1">
    <citation type="journal article" date="2004" name="Science">
        <title>Illuminating the evolutionary history of chlamydiae.</title>
        <authorList>
            <person name="Horn M."/>
            <person name="Collingro A."/>
            <person name="Schmitz-Esser S."/>
            <person name="Beier C.L."/>
            <person name="Purkhold U."/>
            <person name="Fartmann B."/>
            <person name="Brandt P."/>
            <person name="Nyakatura G.J."/>
            <person name="Droege M."/>
            <person name="Frishman D."/>
            <person name="Rattei T."/>
            <person name="Mewes H.-W."/>
            <person name="Wagner M."/>
        </authorList>
    </citation>
    <scope>NUCLEOTIDE SEQUENCE [LARGE SCALE GENOMIC DNA]</scope>
    <source>
        <strain>UWE25</strain>
    </source>
</reference>
<protein>
    <recommendedName>
        <fullName evidence="1">ATP synthase epsilon chain</fullName>
    </recommendedName>
    <alternativeName>
        <fullName evidence="1">ATP synthase F1 sector epsilon subunit</fullName>
    </alternativeName>
    <alternativeName>
        <fullName evidence="1">F-ATPase epsilon subunit</fullName>
    </alternativeName>
</protein>
<proteinExistence type="inferred from homology"/>
<evidence type="ECO:0000255" key="1">
    <source>
        <dbReference type="HAMAP-Rule" id="MF_00530"/>
    </source>
</evidence>
<comment type="function">
    <text evidence="1">Produces ATP from ADP in the presence of a proton gradient across the membrane.</text>
</comment>
<comment type="subunit">
    <text>F-type ATPases have 2 components, CF(1) - the catalytic core - and CF(0) - the membrane proton channel. CF(1) has five subunits: alpha(3), beta(3), gamma(1), delta(1), epsilon(1). CF(0) has three main subunits: a, b and c.</text>
</comment>
<comment type="subcellular location">
    <subcellularLocation>
        <location evidence="1">Cell inner membrane</location>
        <topology evidence="1">Peripheral membrane protein</topology>
    </subcellularLocation>
</comment>
<comment type="similarity">
    <text evidence="1">Belongs to the ATPase epsilon chain family.</text>
</comment>
<name>ATPE_PARUW</name>
<feature type="chain" id="PRO_0000265859" description="ATP synthase epsilon chain">
    <location>
        <begin position="1"/>
        <end position="147"/>
    </location>
</feature>